<comment type="catalytic activity">
    <reaction evidence="1">
        <text>tRNA(Arg) + L-arginine + ATP = L-arginyl-tRNA(Arg) + AMP + diphosphate</text>
        <dbReference type="Rhea" id="RHEA:20301"/>
        <dbReference type="Rhea" id="RHEA-COMP:9658"/>
        <dbReference type="Rhea" id="RHEA-COMP:9673"/>
        <dbReference type="ChEBI" id="CHEBI:30616"/>
        <dbReference type="ChEBI" id="CHEBI:32682"/>
        <dbReference type="ChEBI" id="CHEBI:33019"/>
        <dbReference type="ChEBI" id="CHEBI:78442"/>
        <dbReference type="ChEBI" id="CHEBI:78513"/>
        <dbReference type="ChEBI" id="CHEBI:456215"/>
        <dbReference type="EC" id="6.1.1.19"/>
    </reaction>
</comment>
<comment type="subunit">
    <text evidence="1">Monomer.</text>
</comment>
<comment type="subcellular location">
    <subcellularLocation>
        <location evidence="1">Cytoplasm</location>
    </subcellularLocation>
</comment>
<comment type="similarity">
    <text evidence="1">Belongs to the class-I aminoacyl-tRNA synthetase family.</text>
</comment>
<proteinExistence type="inferred from homology"/>
<name>SYR_POLNS</name>
<feature type="chain" id="PRO_1000095389" description="Arginine--tRNA ligase">
    <location>
        <begin position="1"/>
        <end position="575"/>
    </location>
</feature>
<feature type="short sequence motif" description="'HIGH' region">
    <location>
        <begin position="136"/>
        <end position="146"/>
    </location>
</feature>
<sequence length="575" mass="63379">MLSTNKNRLIEMLSAALTGLAQERGLEAPPTPRLERPKAVDHGDVACNIALQLSKAWKLNPRELAQALVERLQQQTGFNELIASCEIAGPGFSNFRLSNAAKTAVVQEILSGGTSFGESAPADGSATSAMIEFVSANPTGPLHVGHGRQAALGDALANLLATQGIKVHREFYYNDAGVQIANLALSVQARLQGLKPGDAKWPEQAYNGEYIAEIATTFKASPEFKDDIEAIRQFAVAYLRNEQDIDLKTFGVKFDCYYLESSLYTDGSVAQIVGDLQSIGKTYESEGVLWLKTIDDGDDKDRVMRKSDGSFTYFVPDVAYHTSKWNRGFQKVINVQGSDHHGTIARVRSGLQGVAQKRGWDIPKTYPDYVLHKMVTVMRHGEEVKISKRAGSYVTVRDLVEWSGGVTPEMTSEERELALQRGRDAVRFFLISRKADTEFVFDIDLALQQNDENPVFYVQYAHARISSILQQWGGQTSDLASADLSLLQSKASDHLLRCLAEYPEMLTTAAEELAPHALAFYLRNLAGDFHTFYNADRVLVDDQNLKLARLALLSATRQVLQNGLKVLGVSAPAKM</sequence>
<protein>
    <recommendedName>
        <fullName evidence="1">Arginine--tRNA ligase</fullName>
        <ecNumber evidence="1">6.1.1.19</ecNumber>
    </recommendedName>
    <alternativeName>
        <fullName evidence="1">Arginyl-tRNA synthetase</fullName>
        <shortName evidence="1">ArgRS</shortName>
    </alternativeName>
</protein>
<dbReference type="EC" id="6.1.1.19" evidence="1"/>
<dbReference type="EMBL" id="CP001010">
    <property type="protein sequence ID" value="ACB44753.1"/>
    <property type="molecule type" value="Genomic_DNA"/>
</dbReference>
<dbReference type="SMR" id="B1XSF4"/>
<dbReference type="STRING" id="452638.Pnec_1686"/>
<dbReference type="KEGG" id="pne:Pnec_1686"/>
<dbReference type="eggNOG" id="COG0018">
    <property type="taxonomic scope" value="Bacteria"/>
</dbReference>
<dbReference type="HOGENOM" id="CLU_006406_0_1_4"/>
<dbReference type="OrthoDB" id="9803211at2"/>
<dbReference type="GO" id="GO:0005737">
    <property type="term" value="C:cytoplasm"/>
    <property type="evidence" value="ECO:0007669"/>
    <property type="project" value="UniProtKB-SubCell"/>
</dbReference>
<dbReference type="GO" id="GO:0004814">
    <property type="term" value="F:arginine-tRNA ligase activity"/>
    <property type="evidence" value="ECO:0007669"/>
    <property type="project" value="UniProtKB-UniRule"/>
</dbReference>
<dbReference type="GO" id="GO:0005524">
    <property type="term" value="F:ATP binding"/>
    <property type="evidence" value="ECO:0007669"/>
    <property type="project" value="UniProtKB-UniRule"/>
</dbReference>
<dbReference type="GO" id="GO:0006420">
    <property type="term" value="P:arginyl-tRNA aminoacylation"/>
    <property type="evidence" value="ECO:0007669"/>
    <property type="project" value="UniProtKB-UniRule"/>
</dbReference>
<dbReference type="CDD" id="cd07956">
    <property type="entry name" value="Anticodon_Ia_Arg"/>
    <property type="match status" value="1"/>
</dbReference>
<dbReference type="CDD" id="cd00671">
    <property type="entry name" value="ArgRS_core"/>
    <property type="match status" value="1"/>
</dbReference>
<dbReference type="FunFam" id="1.10.730.10:FF:000008">
    <property type="entry name" value="Arginine--tRNA ligase"/>
    <property type="match status" value="1"/>
</dbReference>
<dbReference type="Gene3D" id="3.30.1360.70">
    <property type="entry name" value="Arginyl tRNA synthetase N-terminal domain"/>
    <property type="match status" value="1"/>
</dbReference>
<dbReference type="Gene3D" id="3.40.50.620">
    <property type="entry name" value="HUPs"/>
    <property type="match status" value="1"/>
</dbReference>
<dbReference type="Gene3D" id="1.10.730.10">
    <property type="entry name" value="Isoleucyl-tRNA Synthetase, Domain 1"/>
    <property type="match status" value="1"/>
</dbReference>
<dbReference type="HAMAP" id="MF_00123">
    <property type="entry name" value="Arg_tRNA_synth"/>
    <property type="match status" value="1"/>
</dbReference>
<dbReference type="InterPro" id="IPR001412">
    <property type="entry name" value="aa-tRNA-synth_I_CS"/>
</dbReference>
<dbReference type="InterPro" id="IPR001278">
    <property type="entry name" value="Arg-tRNA-ligase"/>
</dbReference>
<dbReference type="InterPro" id="IPR005148">
    <property type="entry name" value="Arg-tRNA-synth_N"/>
</dbReference>
<dbReference type="InterPro" id="IPR036695">
    <property type="entry name" value="Arg-tRNA-synth_N_sf"/>
</dbReference>
<dbReference type="InterPro" id="IPR035684">
    <property type="entry name" value="ArgRS_core"/>
</dbReference>
<dbReference type="InterPro" id="IPR008909">
    <property type="entry name" value="DALR_anticod-bd"/>
</dbReference>
<dbReference type="InterPro" id="IPR014729">
    <property type="entry name" value="Rossmann-like_a/b/a_fold"/>
</dbReference>
<dbReference type="InterPro" id="IPR009080">
    <property type="entry name" value="tRNAsynth_Ia_anticodon-bd"/>
</dbReference>
<dbReference type="NCBIfam" id="TIGR00456">
    <property type="entry name" value="argS"/>
    <property type="match status" value="1"/>
</dbReference>
<dbReference type="PANTHER" id="PTHR11956:SF5">
    <property type="entry name" value="ARGININE--TRNA LIGASE, CYTOPLASMIC"/>
    <property type="match status" value="1"/>
</dbReference>
<dbReference type="PANTHER" id="PTHR11956">
    <property type="entry name" value="ARGINYL-TRNA SYNTHETASE"/>
    <property type="match status" value="1"/>
</dbReference>
<dbReference type="Pfam" id="PF03485">
    <property type="entry name" value="Arg_tRNA_synt_N"/>
    <property type="match status" value="1"/>
</dbReference>
<dbReference type="Pfam" id="PF05746">
    <property type="entry name" value="DALR_1"/>
    <property type="match status" value="1"/>
</dbReference>
<dbReference type="Pfam" id="PF00750">
    <property type="entry name" value="tRNA-synt_1d"/>
    <property type="match status" value="1"/>
</dbReference>
<dbReference type="PRINTS" id="PR01038">
    <property type="entry name" value="TRNASYNTHARG"/>
</dbReference>
<dbReference type="SMART" id="SM01016">
    <property type="entry name" value="Arg_tRNA_synt_N"/>
    <property type="match status" value="1"/>
</dbReference>
<dbReference type="SMART" id="SM00836">
    <property type="entry name" value="DALR_1"/>
    <property type="match status" value="1"/>
</dbReference>
<dbReference type="SUPFAM" id="SSF47323">
    <property type="entry name" value="Anticodon-binding domain of a subclass of class I aminoacyl-tRNA synthetases"/>
    <property type="match status" value="1"/>
</dbReference>
<dbReference type="SUPFAM" id="SSF55190">
    <property type="entry name" value="Arginyl-tRNA synthetase (ArgRS), N-terminal 'additional' domain"/>
    <property type="match status" value="1"/>
</dbReference>
<dbReference type="SUPFAM" id="SSF52374">
    <property type="entry name" value="Nucleotidylyl transferase"/>
    <property type="match status" value="1"/>
</dbReference>
<dbReference type="PROSITE" id="PS00178">
    <property type="entry name" value="AA_TRNA_LIGASE_I"/>
    <property type="match status" value="1"/>
</dbReference>
<reference key="1">
    <citation type="journal article" date="2013" name="Proc. Natl. Acad. Sci. U.S.A.">
        <title>Polynucleobacter necessarius, a model for genome reduction in both free-living and symbiotic bacteria.</title>
        <authorList>
            <person name="Boscaro V."/>
            <person name="Felletti M."/>
            <person name="Vannini C."/>
            <person name="Ackerman M.S."/>
            <person name="Chain P.S."/>
            <person name="Malfatti S."/>
            <person name="Vergez L.M."/>
            <person name="Shin M."/>
            <person name="Doak T.G."/>
            <person name="Lynch M."/>
            <person name="Petroni G."/>
        </authorList>
    </citation>
    <scope>NUCLEOTIDE SEQUENCE [LARGE SCALE GENOMIC DNA]</scope>
    <source>
        <strain>STIR1</strain>
    </source>
</reference>
<evidence type="ECO:0000255" key="1">
    <source>
        <dbReference type="HAMAP-Rule" id="MF_00123"/>
    </source>
</evidence>
<accession>B1XSF4</accession>
<gene>
    <name evidence="1" type="primary">argS</name>
    <name type="ordered locus">Pnec_1686</name>
</gene>
<organism>
    <name type="scientific">Polynucleobacter necessarius subsp. necessarius (strain STIR1)</name>
    <dbReference type="NCBI Taxonomy" id="452638"/>
    <lineage>
        <taxon>Bacteria</taxon>
        <taxon>Pseudomonadati</taxon>
        <taxon>Pseudomonadota</taxon>
        <taxon>Betaproteobacteria</taxon>
        <taxon>Burkholderiales</taxon>
        <taxon>Burkholderiaceae</taxon>
        <taxon>Polynucleobacter</taxon>
    </lineage>
</organism>
<keyword id="KW-0030">Aminoacyl-tRNA synthetase</keyword>
<keyword id="KW-0067">ATP-binding</keyword>
<keyword id="KW-0963">Cytoplasm</keyword>
<keyword id="KW-0436">Ligase</keyword>
<keyword id="KW-0547">Nucleotide-binding</keyword>
<keyword id="KW-0648">Protein biosynthesis</keyword>